<organism>
    <name type="scientific">Homo sapiens</name>
    <name type="common">Human</name>
    <dbReference type="NCBI Taxonomy" id="9606"/>
    <lineage>
        <taxon>Eukaryota</taxon>
        <taxon>Metazoa</taxon>
        <taxon>Chordata</taxon>
        <taxon>Craniata</taxon>
        <taxon>Vertebrata</taxon>
        <taxon>Euteleostomi</taxon>
        <taxon>Mammalia</taxon>
        <taxon>Eutheria</taxon>
        <taxon>Euarchontoglires</taxon>
        <taxon>Primates</taxon>
        <taxon>Haplorrhini</taxon>
        <taxon>Catarrhini</taxon>
        <taxon>Hominidae</taxon>
        <taxon>Homo</taxon>
    </lineage>
</organism>
<name>INSL4_HUMAN</name>
<evidence type="ECO:0000250" key="1"/>
<evidence type="ECO:0000269" key="2">
    <source>
    </source>
</evidence>
<evidence type="ECO:0000269" key="3">
    <source>
    </source>
</evidence>
<evidence type="ECO:0000269" key="4">
    <source>
    </source>
</evidence>
<evidence type="ECO:0000305" key="5"/>
<sequence length="139" mass="15445">MASLFRSYLPAIWLLLSQLLRESLAAELRGCGPRFGKHLLSYCPMPEKTFTTTPGGWLLESGRPKEMVSTSNNKDGQALGTTSEFIPNLSPELKKPLSEGQPSLKKIILSRKKRSGRHRFDPFCCEVICDDGTSVKLCT</sequence>
<reference key="1">
    <citation type="journal article" date="1995" name="Genomics">
        <title>Cloning of a new member of the insulin gene superfamily (INSL4) expressed in human placenta.</title>
        <authorList>
            <person name="Chassin D."/>
            <person name="Laurent A."/>
            <person name="Janneau J.-L."/>
            <person name="Berger R."/>
            <person name="Bellet D."/>
        </authorList>
    </citation>
    <scope>NUCLEOTIDE SEQUENCE [MRNA]</scope>
    <source>
        <tissue>Placenta</tissue>
    </source>
</reference>
<reference key="2">
    <citation type="journal article" date="2004" name="Nat. Genet.">
        <title>Complete sequencing and characterization of 21,243 full-length human cDNAs.</title>
        <authorList>
            <person name="Ota T."/>
            <person name="Suzuki Y."/>
            <person name="Nishikawa T."/>
            <person name="Otsuki T."/>
            <person name="Sugiyama T."/>
            <person name="Irie R."/>
            <person name="Wakamatsu A."/>
            <person name="Hayashi K."/>
            <person name="Sato H."/>
            <person name="Nagai K."/>
            <person name="Kimura K."/>
            <person name="Makita H."/>
            <person name="Sekine M."/>
            <person name="Obayashi M."/>
            <person name="Nishi T."/>
            <person name="Shibahara T."/>
            <person name="Tanaka T."/>
            <person name="Ishii S."/>
            <person name="Yamamoto J."/>
            <person name="Saito K."/>
            <person name="Kawai Y."/>
            <person name="Isono Y."/>
            <person name="Nakamura Y."/>
            <person name="Nagahari K."/>
            <person name="Murakami K."/>
            <person name="Yasuda T."/>
            <person name="Iwayanagi T."/>
            <person name="Wagatsuma M."/>
            <person name="Shiratori A."/>
            <person name="Sudo H."/>
            <person name="Hosoiri T."/>
            <person name="Kaku Y."/>
            <person name="Kodaira H."/>
            <person name="Kondo H."/>
            <person name="Sugawara M."/>
            <person name="Takahashi M."/>
            <person name="Kanda K."/>
            <person name="Yokoi T."/>
            <person name="Furuya T."/>
            <person name="Kikkawa E."/>
            <person name="Omura Y."/>
            <person name="Abe K."/>
            <person name="Kamihara K."/>
            <person name="Katsuta N."/>
            <person name="Sato K."/>
            <person name="Tanikawa M."/>
            <person name="Yamazaki M."/>
            <person name="Ninomiya K."/>
            <person name="Ishibashi T."/>
            <person name="Yamashita H."/>
            <person name="Murakawa K."/>
            <person name="Fujimori K."/>
            <person name="Tanai H."/>
            <person name="Kimata M."/>
            <person name="Watanabe M."/>
            <person name="Hiraoka S."/>
            <person name="Chiba Y."/>
            <person name="Ishida S."/>
            <person name="Ono Y."/>
            <person name="Takiguchi S."/>
            <person name="Watanabe S."/>
            <person name="Yosida M."/>
            <person name="Hotuta T."/>
            <person name="Kusano J."/>
            <person name="Kanehori K."/>
            <person name="Takahashi-Fujii A."/>
            <person name="Hara H."/>
            <person name="Tanase T.-O."/>
            <person name="Nomura Y."/>
            <person name="Togiya S."/>
            <person name="Komai F."/>
            <person name="Hara R."/>
            <person name="Takeuchi K."/>
            <person name="Arita M."/>
            <person name="Imose N."/>
            <person name="Musashino K."/>
            <person name="Yuuki H."/>
            <person name="Oshima A."/>
            <person name="Sasaki N."/>
            <person name="Aotsuka S."/>
            <person name="Yoshikawa Y."/>
            <person name="Matsunawa H."/>
            <person name="Ichihara T."/>
            <person name="Shiohata N."/>
            <person name="Sano S."/>
            <person name="Moriya S."/>
            <person name="Momiyama H."/>
            <person name="Satoh N."/>
            <person name="Takami S."/>
            <person name="Terashima Y."/>
            <person name="Suzuki O."/>
            <person name="Nakagawa S."/>
            <person name="Senoh A."/>
            <person name="Mizoguchi H."/>
            <person name="Goto Y."/>
            <person name="Shimizu F."/>
            <person name="Wakebe H."/>
            <person name="Hishigaki H."/>
            <person name="Watanabe T."/>
            <person name="Sugiyama A."/>
            <person name="Takemoto M."/>
            <person name="Kawakami B."/>
            <person name="Yamazaki M."/>
            <person name="Watanabe K."/>
            <person name="Kumagai A."/>
            <person name="Itakura S."/>
            <person name="Fukuzumi Y."/>
            <person name="Fujimori Y."/>
            <person name="Komiyama M."/>
            <person name="Tashiro H."/>
            <person name="Tanigami A."/>
            <person name="Fujiwara T."/>
            <person name="Ono T."/>
            <person name="Yamada K."/>
            <person name="Fujii Y."/>
            <person name="Ozaki K."/>
            <person name="Hirao M."/>
            <person name="Ohmori Y."/>
            <person name="Kawabata A."/>
            <person name="Hikiji T."/>
            <person name="Kobatake N."/>
            <person name="Inagaki H."/>
            <person name="Ikema Y."/>
            <person name="Okamoto S."/>
            <person name="Okitani R."/>
            <person name="Kawakami T."/>
            <person name="Noguchi S."/>
            <person name="Itoh T."/>
            <person name="Shigeta K."/>
            <person name="Senba T."/>
            <person name="Matsumura K."/>
            <person name="Nakajima Y."/>
            <person name="Mizuno T."/>
            <person name="Morinaga M."/>
            <person name="Sasaki M."/>
            <person name="Togashi T."/>
            <person name="Oyama M."/>
            <person name="Hata H."/>
            <person name="Watanabe M."/>
            <person name="Komatsu T."/>
            <person name="Mizushima-Sugano J."/>
            <person name="Satoh T."/>
            <person name="Shirai Y."/>
            <person name="Takahashi Y."/>
            <person name="Nakagawa K."/>
            <person name="Okumura K."/>
            <person name="Nagase T."/>
            <person name="Nomura N."/>
            <person name="Kikuchi H."/>
            <person name="Masuho Y."/>
            <person name="Yamashita R."/>
            <person name="Nakai K."/>
            <person name="Yada T."/>
            <person name="Nakamura Y."/>
            <person name="Ohara O."/>
            <person name="Isogai T."/>
            <person name="Sugano S."/>
        </authorList>
    </citation>
    <scope>NUCLEOTIDE SEQUENCE [LARGE SCALE MRNA]</scope>
    <source>
        <tissue>Placenta</tissue>
    </source>
</reference>
<reference key="3">
    <citation type="journal article" date="2004" name="Nature">
        <title>DNA sequence and analysis of human chromosome 9.</title>
        <authorList>
            <person name="Humphray S.J."/>
            <person name="Oliver K."/>
            <person name="Hunt A.R."/>
            <person name="Plumb R.W."/>
            <person name="Loveland J.E."/>
            <person name="Howe K.L."/>
            <person name="Andrews T.D."/>
            <person name="Searle S."/>
            <person name="Hunt S.E."/>
            <person name="Scott C.E."/>
            <person name="Jones M.C."/>
            <person name="Ainscough R."/>
            <person name="Almeida J.P."/>
            <person name="Ambrose K.D."/>
            <person name="Ashwell R.I.S."/>
            <person name="Babbage A.K."/>
            <person name="Babbage S."/>
            <person name="Bagguley C.L."/>
            <person name="Bailey J."/>
            <person name="Banerjee R."/>
            <person name="Barker D.J."/>
            <person name="Barlow K.F."/>
            <person name="Bates K."/>
            <person name="Beasley H."/>
            <person name="Beasley O."/>
            <person name="Bird C.P."/>
            <person name="Bray-Allen S."/>
            <person name="Brown A.J."/>
            <person name="Brown J.Y."/>
            <person name="Burford D."/>
            <person name="Burrill W."/>
            <person name="Burton J."/>
            <person name="Carder C."/>
            <person name="Carter N.P."/>
            <person name="Chapman J.C."/>
            <person name="Chen Y."/>
            <person name="Clarke G."/>
            <person name="Clark S.Y."/>
            <person name="Clee C.M."/>
            <person name="Clegg S."/>
            <person name="Collier R.E."/>
            <person name="Corby N."/>
            <person name="Crosier M."/>
            <person name="Cummings A.T."/>
            <person name="Davies J."/>
            <person name="Dhami P."/>
            <person name="Dunn M."/>
            <person name="Dutta I."/>
            <person name="Dyer L.W."/>
            <person name="Earthrowl M.E."/>
            <person name="Faulkner L."/>
            <person name="Fleming C.J."/>
            <person name="Frankish A."/>
            <person name="Frankland J.A."/>
            <person name="French L."/>
            <person name="Fricker D.G."/>
            <person name="Garner P."/>
            <person name="Garnett J."/>
            <person name="Ghori J."/>
            <person name="Gilbert J.G.R."/>
            <person name="Glison C."/>
            <person name="Grafham D.V."/>
            <person name="Gribble S."/>
            <person name="Griffiths C."/>
            <person name="Griffiths-Jones S."/>
            <person name="Grocock R."/>
            <person name="Guy J."/>
            <person name="Hall R.E."/>
            <person name="Hammond S."/>
            <person name="Harley J.L."/>
            <person name="Harrison E.S.I."/>
            <person name="Hart E.A."/>
            <person name="Heath P.D."/>
            <person name="Henderson C.D."/>
            <person name="Hopkins B.L."/>
            <person name="Howard P.J."/>
            <person name="Howden P.J."/>
            <person name="Huckle E."/>
            <person name="Johnson C."/>
            <person name="Johnson D."/>
            <person name="Joy A.A."/>
            <person name="Kay M."/>
            <person name="Keenan S."/>
            <person name="Kershaw J.K."/>
            <person name="Kimberley A.M."/>
            <person name="King A."/>
            <person name="Knights A."/>
            <person name="Laird G.K."/>
            <person name="Langford C."/>
            <person name="Lawlor S."/>
            <person name="Leongamornlert D.A."/>
            <person name="Leversha M."/>
            <person name="Lloyd C."/>
            <person name="Lloyd D.M."/>
            <person name="Lovell J."/>
            <person name="Martin S."/>
            <person name="Mashreghi-Mohammadi M."/>
            <person name="Matthews L."/>
            <person name="McLaren S."/>
            <person name="McLay K.E."/>
            <person name="McMurray A."/>
            <person name="Milne S."/>
            <person name="Nickerson T."/>
            <person name="Nisbett J."/>
            <person name="Nordsiek G."/>
            <person name="Pearce A.V."/>
            <person name="Peck A.I."/>
            <person name="Porter K.M."/>
            <person name="Pandian R."/>
            <person name="Pelan S."/>
            <person name="Phillimore B."/>
            <person name="Povey S."/>
            <person name="Ramsey Y."/>
            <person name="Rand V."/>
            <person name="Scharfe M."/>
            <person name="Sehra H.K."/>
            <person name="Shownkeen R."/>
            <person name="Sims S.K."/>
            <person name="Skuce C.D."/>
            <person name="Smith M."/>
            <person name="Steward C.A."/>
            <person name="Swarbreck D."/>
            <person name="Sycamore N."/>
            <person name="Tester J."/>
            <person name="Thorpe A."/>
            <person name="Tracey A."/>
            <person name="Tromans A."/>
            <person name="Thomas D.W."/>
            <person name="Wall M."/>
            <person name="Wallis J.M."/>
            <person name="West A.P."/>
            <person name="Whitehead S.L."/>
            <person name="Willey D.L."/>
            <person name="Williams S.A."/>
            <person name="Wilming L."/>
            <person name="Wray P.W."/>
            <person name="Young L."/>
            <person name="Ashurst J.L."/>
            <person name="Coulson A."/>
            <person name="Blocker H."/>
            <person name="Durbin R.M."/>
            <person name="Sulston J.E."/>
            <person name="Hubbard T."/>
            <person name="Jackson M.J."/>
            <person name="Bentley D.R."/>
            <person name="Beck S."/>
            <person name="Rogers J."/>
            <person name="Dunham I."/>
        </authorList>
    </citation>
    <scope>NUCLEOTIDE SEQUENCE [LARGE SCALE GENOMIC DNA]</scope>
</reference>
<reference key="4">
    <citation type="submission" date="2005-09" db="EMBL/GenBank/DDBJ databases">
        <authorList>
            <person name="Mural R.J."/>
            <person name="Istrail S."/>
            <person name="Sutton G.G."/>
            <person name="Florea L."/>
            <person name="Halpern A.L."/>
            <person name="Mobarry C.M."/>
            <person name="Lippert R."/>
            <person name="Walenz B."/>
            <person name="Shatkay H."/>
            <person name="Dew I."/>
            <person name="Miller J.R."/>
            <person name="Flanigan M.J."/>
            <person name="Edwards N.J."/>
            <person name="Bolanos R."/>
            <person name="Fasulo D."/>
            <person name="Halldorsson B.V."/>
            <person name="Hannenhalli S."/>
            <person name="Turner R."/>
            <person name="Yooseph S."/>
            <person name="Lu F."/>
            <person name="Nusskern D.R."/>
            <person name="Shue B.C."/>
            <person name="Zheng X.H."/>
            <person name="Zhong F."/>
            <person name="Delcher A.L."/>
            <person name="Huson D.H."/>
            <person name="Kravitz S.A."/>
            <person name="Mouchard L."/>
            <person name="Reinert K."/>
            <person name="Remington K.A."/>
            <person name="Clark A.G."/>
            <person name="Waterman M.S."/>
            <person name="Eichler E.E."/>
            <person name="Adams M.D."/>
            <person name="Hunkapiller M.W."/>
            <person name="Myers E.W."/>
            <person name="Venter J.C."/>
        </authorList>
    </citation>
    <scope>NUCLEOTIDE SEQUENCE [LARGE SCALE GENOMIC DNA]</scope>
</reference>
<reference key="5">
    <citation type="journal article" date="2004" name="Genome Res.">
        <title>The status, quality, and expansion of the NIH full-length cDNA project: the Mammalian Gene Collection (MGC).</title>
        <authorList>
            <consortium name="The MGC Project Team"/>
        </authorList>
    </citation>
    <scope>NUCLEOTIDE SEQUENCE [LARGE SCALE MRNA]</scope>
    <source>
        <tissue>Placenta</tissue>
    </source>
</reference>
<reference key="6">
    <citation type="journal article" date="2004" name="Protein Sci.">
        <title>Signal peptide prediction based on analysis of experimentally verified cleavage sites.</title>
        <authorList>
            <person name="Zhang Z."/>
            <person name="Henzel W.J."/>
        </authorList>
    </citation>
    <scope>PROTEIN SEQUENCE OF 26-40</scope>
</reference>
<reference key="7">
    <citation type="journal article" date="1997" name="J. Clin. Endocrinol. Metab.">
        <title>Identification of pro-EPIL and EPIL peptides translated from insulin-like 4 (INSL4) mRNA in human placenta.</title>
        <authorList>
            <person name="Bellet D."/>
            <person name="Lavaissiere L."/>
            <person name="Mock P."/>
            <person name="Laurent A."/>
            <person name="Sabourin J.-C."/>
            <person name="Bedossa P."/>
            <person name="Le Bouteiller P."/>
            <person name="Frydman R."/>
            <person name="Troalen F."/>
            <person name="Bidart J.-M."/>
        </authorList>
    </citation>
    <scope>PROTEOLYTIC PROCESSING</scope>
</reference>
<reference key="8">
    <citation type="journal article" date="1998" name="Mol. Reprod. Dev.">
        <title>Insulin-like 4 (INSL4) gene expression in human embryonic and trophoblastic tissues.</title>
        <authorList>
            <person name="Laurent A."/>
            <person name="Rouillac C."/>
            <person name="Delezoide A.-L."/>
            <person name="Giovangrandi Y."/>
            <person name="Vekemans M."/>
            <person name="Bellet D."/>
            <person name="Abitbol M."/>
            <person name="Vidaud M."/>
        </authorList>
    </citation>
    <scope>TISSUE SPECIFICITY</scope>
</reference>
<reference key="9">
    <citation type="journal article" date="2002" name="J. Clin. Endocrinol. Metab.">
        <title>Transcriptional expression of genes involved in cell invasion and migration by normal and tumoral trophoblast cells.</title>
        <authorList>
            <person name="Janneau J.-L."/>
            <person name="Maldonado-Estrada J."/>
            <person name="Tachdjian G."/>
            <person name="Miran I."/>
            <person name="Motte N."/>
            <person name="Saulnier P."/>
            <person name="Sabourin J.-C."/>
            <person name="Cote J.-F."/>
            <person name="Simon B."/>
            <person name="Frydman R."/>
            <person name="Chaouat G."/>
            <person name="Bellet D."/>
        </authorList>
    </citation>
    <scope>TISSUE SPECIFICITY</scope>
    <scope>POSSIBLE INVOLVEMENT IN INVASION/MIGRATION OF TROPHOBLAST CELLS</scope>
</reference>
<comment type="function">
    <text>May play an important role in trophoblast development and in the regulation of bone formation.</text>
</comment>
<comment type="subcellular location">
    <subcellularLocation>
        <location evidence="1">Secreted</location>
    </subcellularLocation>
</comment>
<comment type="tissue specificity">
    <text evidence="2 4">Expressed in placenta, uterus and in fetal perichondrium. Expression levels were increased in both early placentas and molar pregnancies and were reduced in choriocarcinoma cells.</text>
</comment>
<comment type="developmental stage">
    <text>Highly expressed in the early placenta. Expression of epil peptides in the villous cytotrophoblast is different from that displayed by the syncytiotrophoblast. In fetal tissues it was identified in the perichondrium of all four limbs, vertebrae, and ribs. It was abundant in interbone ligaments.</text>
</comment>
<comment type="similarity">
    <text evidence="5">Belongs to the insulin family.</text>
</comment>
<keyword id="KW-0165">Cleavage on pair of basic residues</keyword>
<keyword id="KW-0903">Direct protein sequencing</keyword>
<keyword id="KW-1015">Disulfide bond</keyword>
<keyword id="KW-0372">Hormone</keyword>
<keyword id="KW-1267">Proteomics identification</keyword>
<keyword id="KW-1185">Reference proteome</keyword>
<keyword id="KW-0964">Secreted</keyword>
<keyword id="KW-0732">Signal</keyword>
<dbReference type="EMBL" id="L34838">
    <property type="protein sequence ID" value="AAB08516.1"/>
    <property type="molecule type" value="mRNA"/>
</dbReference>
<dbReference type="EMBL" id="AK291543">
    <property type="protein sequence ID" value="BAF84232.1"/>
    <property type="molecule type" value="mRNA"/>
</dbReference>
<dbReference type="EMBL" id="AL133547">
    <property type="status" value="NOT_ANNOTATED_CDS"/>
    <property type="molecule type" value="Genomic_DNA"/>
</dbReference>
<dbReference type="EMBL" id="CH471071">
    <property type="protein sequence ID" value="EAW58772.1"/>
    <property type="molecule type" value="Genomic_DNA"/>
</dbReference>
<dbReference type="EMBL" id="BC026254">
    <property type="protein sequence ID" value="AAH26254.1"/>
    <property type="molecule type" value="mRNA"/>
</dbReference>
<dbReference type="CCDS" id="CCDS6459.1"/>
<dbReference type="RefSeq" id="NP_002186.1">
    <property type="nucleotide sequence ID" value="NM_002195.2"/>
</dbReference>
<dbReference type="BioGRID" id="109852">
    <property type="interactions" value="6"/>
</dbReference>
<dbReference type="FunCoup" id="Q14641">
    <property type="interactions" value="8"/>
</dbReference>
<dbReference type="IntAct" id="Q14641">
    <property type="interactions" value="5"/>
</dbReference>
<dbReference type="STRING" id="9606.ENSP00000239316"/>
<dbReference type="GlyGen" id="Q14641">
    <property type="glycosylation" value="1 site, 1 O-linked glycan (1 site)"/>
</dbReference>
<dbReference type="iPTMnet" id="Q14641"/>
<dbReference type="PhosphoSitePlus" id="Q14641"/>
<dbReference type="BioMuta" id="INSL4"/>
<dbReference type="DMDM" id="2497411"/>
<dbReference type="jPOST" id="Q14641"/>
<dbReference type="MassIVE" id="Q14641"/>
<dbReference type="PaxDb" id="9606-ENSP00000239316"/>
<dbReference type="PeptideAtlas" id="Q14641"/>
<dbReference type="Antibodypedia" id="24117">
    <property type="antibodies" value="126 antibodies from 23 providers"/>
</dbReference>
<dbReference type="DNASU" id="3641"/>
<dbReference type="Ensembl" id="ENST00000239316.4">
    <property type="protein sequence ID" value="ENSP00000239316.4"/>
    <property type="gene ID" value="ENSG00000120211.4"/>
</dbReference>
<dbReference type="GeneID" id="3641"/>
<dbReference type="KEGG" id="hsa:3641"/>
<dbReference type="MANE-Select" id="ENST00000239316.4">
    <property type="protein sequence ID" value="ENSP00000239316.4"/>
    <property type="RefSeq nucleotide sequence ID" value="NM_002195.2"/>
    <property type="RefSeq protein sequence ID" value="NP_002186.1"/>
</dbReference>
<dbReference type="UCSC" id="uc003ziy.4">
    <property type="organism name" value="human"/>
</dbReference>
<dbReference type="AGR" id="HGNC:6087"/>
<dbReference type="CTD" id="3641"/>
<dbReference type="DisGeNET" id="3641"/>
<dbReference type="GeneCards" id="INSL4"/>
<dbReference type="HGNC" id="HGNC:6087">
    <property type="gene designation" value="INSL4"/>
</dbReference>
<dbReference type="HPA" id="ENSG00000120211">
    <property type="expression patterns" value="Tissue enriched (placenta)"/>
</dbReference>
<dbReference type="MIM" id="600910">
    <property type="type" value="gene"/>
</dbReference>
<dbReference type="neXtProt" id="NX_Q14641"/>
<dbReference type="OpenTargets" id="ENSG00000120211"/>
<dbReference type="PharmGKB" id="PA29894"/>
<dbReference type="VEuPathDB" id="HostDB:ENSG00000120211"/>
<dbReference type="eggNOG" id="ENOG502TJQC">
    <property type="taxonomic scope" value="Eukaryota"/>
</dbReference>
<dbReference type="GeneTree" id="ENSGT00940000154434"/>
<dbReference type="HOGENOM" id="CLU_1864514_0_0_1"/>
<dbReference type="InParanoid" id="Q14641"/>
<dbReference type="OMA" id="NGHHRFD"/>
<dbReference type="OrthoDB" id="9479050at2759"/>
<dbReference type="PAN-GO" id="Q14641">
    <property type="GO annotations" value="0 GO annotations based on evolutionary models"/>
</dbReference>
<dbReference type="PhylomeDB" id="Q14641"/>
<dbReference type="TreeFam" id="TF333404"/>
<dbReference type="PathwayCommons" id="Q14641"/>
<dbReference type="BioGRID-ORCS" id="3641">
    <property type="hits" value="14 hits in 1139 CRISPR screens"/>
</dbReference>
<dbReference type="GeneWiki" id="INSL4"/>
<dbReference type="GenomeRNAi" id="3641"/>
<dbReference type="Pharos" id="Q14641">
    <property type="development level" value="Tbio"/>
</dbReference>
<dbReference type="PRO" id="PR:Q14641"/>
<dbReference type="Proteomes" id="UP000005640">
    <property type="component" value="Chromosome 9"/>
</dbReference>
<dbReference type="RNAct" id="Q14641">
    <property type="molecule type" value="protein"/>
</dbReference>
<dbReference type="Bgee" id="ENSG00000120211">
    <property type="expression patterns" value="Expressed in placenta and 16 other cell types or tissues"/>
</dbReference>
<dbReference type="GO" id="GO:0005615">
    <property type="term" value="C:extracellular space"/>
    <property type="evidence" value="ECO:0000304"/>
    <property type="project" value="ProtInc"/>
</dbReference>
<dbReference type="GO" id="GO:0005179">
    <property type="term" value="F:hormone activity"/>
    <property type="evidence" value="ECO:0007669"/>
    <property type="project" value="UniProtKB-KW"/>
</dbReference>
<dbReference type="GO" id="GO:0005159">
    <property type="term" value="F:insulin-like growth factor receptor binding"/>
    <property type="evidence" value="ECO:0000304"/>
    <property type="project" value="ProtInc"/>
</dbReference>
<dbReference type="GO" id="GO:0005102">
    <property type="term" value="F:signaling receptor binding"/>
    <property type="evidence" value="ECO:0000304"/>
    <property type="project" value="ProtInc"/>
</dbReference>
<dbReference type="GO" id="GO:0007267">
    <property type="term" value="P:cell-cell signaling"/>
    <property type="evidence" value="ECO:0000304"/>
    <property type="project" value="ProtInc"/>
</dbReference>
<dbReference type="GO" id="GO:1901384">
    <property type="term" value="P:positive regulation of chorionic trophoblast cell proliferation"/>
    <property type="evidence" value="ECO:0000304"/>
    <property type="project" value="GO_Central"/>
</dbReference>
<dbReference type="InterPro" id="IPR023258">
    <property type="entry name" value="Placentin"/>
</dbReference>
<dbReference type="InterPro" id="IPR022421">
    <property type="entry name" value="Relaxin"/>
</dbReference>
<dbReference type="InterPro" id="IPR051042">
    <property type="entry name" value="Repro_Hormone_Insulin-like"/>
</dbReference>
<dbReference type="PANTHER" id="PTHR12004:SF3">
    <property type="entry name" value="EARLY PLACENTA INSULIN-LIKE PEPTIDE"/>
    <property type="match status" value="1"/>
</dbReference>
<dbReference type="PANTHER" id="PTHR12004">
    <property type="entry name" value="RELAXIN"/>
    <property type="match status" value="1"/>
</dbReference>
<dbReference type="PRINTS" id="PR02033">
    <property type="entry name" value="PLACENTIN"/>
</dbReference>
<dbReference type="PRINTS" id="PR02004">
    <property type="entry name" value="RELAXIN"/>
</dbReference>
<dbReference type="PROSITE" id="PS00262">
    <property type="entry name" value="INSULIN"/>
    <property type="match status" value="1"/>
</dbReference>
<accession>Q14641</accession>
<accession>A8K678</accession>
<accession>Q5W127</accession>
<protein>
    <recommendedName>
        <fullName>Early placenta insulin-like peptide</fullName>
        <shortName>EPIL</shortName>
    </recommendedName>
    <alternativeName>
        <fullName>Insulin-like peptide 4</fullName>
    </alternativeName>
    <alternativeName>
        <fullName>Placentin</fullName>
    </alternativeName>
    <component>
        <recommendedName>
            <fullName>Early placenta insulin-like peptide B chain</fullName>
        </recommendedName>
    </component>
    <component>
        <recommendedName>
            <fullName>Early placenta insulin-like peptide A chain</fullName>
        </recommendedName>
    </component>
</protein>
<gene>
    <name type="primary">INSL4</name>
</gene>
<feature type="signal peptide" evidence="3">
    <location>
        <begin position="1"/>
        <end position="25"/>
    </location>
</feature>
<feature type="chain" id="PRO_0000016155" description="Early placenta insulin-like peptide">
    <location>
        <begin position="26"/>
        <end position="139"/>
    </location>
</feature>
<feature type="peptide" id="PRO_0000016156" description="Early placenta insulin-like peptide B chain">
    <location>
        <begin position="26"/>
        <end position="58"/>
    </location>
</feature>
<feature type="propeptide" id="PRO_0000016157" description="C peptide">
    <location>
        <begin position="59"/>
        <end position="114"/>
    </location>
</feature>
<feature type="peptide" id="PRO_0000016158" description="Early placenta insulin-like peptide A chain">
    <location>
        <begin position="115"/>
        <end position="139"/>
    </location>
</feature>
<feature type="disulfide bond" description="Interchain (between B and A chains)" evidence="1">
    <location>
        <begin position="31"/>
        <end position="125"/>
    </location>
</feature>
<feature type="disulfide bond" description="Interchain (between B and A chains)" evidence="1">
    <location>
        <begin position="43"/>
        <end position="138"/>
    </location>
</feature>
<feature type="disulfide bond" evidence="1">
    <location>
        <begin position="124"/>
        <end position="129"/>
    </location>
</feature>
<proteinExistence type="evidence at protein level"/>